<organism>
    <name type="scientific">Mus musculus</name>
    <name type="common">Mouse</name>
    <dbReference type="NCBI Taxonomy" id="10090"/>
    <lineage>
        <taxon>Eukaryota</taxon>
        <taxon>Metazoa</taxon>
        <taxon>Chordata</taxon>
        <taxon>Craniata</taxon>
        <taxon>Vertebrata</taxon>
        <taxon>Euteleostomi</taxon>
        <taxon>Mammalia</taxon>
        <taxon>Eutheria</taxon>
        <taxon>Euarchontoglires</taxon>
        <taxon>Glires</taxon>
        <taxon>Rodentia</taxon>
        <taxon>Myomorpha</taxon>
        <taxon>Muroidea</taxon>
        <taxon>Muridae</taxon>
        <taxon>Murinae</taxon>
        <taxon>Mus</taxon>
        <taxon>Mus</taxon>
    </lineage>
</organism>
<sequence length="113" mass="12824">MSTIQNLQSFDPFADATKGDDLLPAGTEDYIHIRIQQRNGRKTLTTVQGIADDYDKKKLVKAFKKKFACNGTVIEHPEYGEVIQLQGDQRKNICQFLLEVGIVKEEQLKVHGF</sequence>
<protein>
    <recommendedName>
        <fullName>Eukaryotic translation initiation factor 1b</fullName>
        <shortName>eIF1b</shortName>
    </recommendedName>
</protein>
<proteinExistence type="evidence at protein level"/>
<gene>
    <name type="primary">Eif1b</name>
</gene>
<dbReference type="EMBL" id="AK005192">
    <property type="protein sequence ID" value="BAB23874.1"/>
    <property type="molecule type" value="mRNA"/>
</dbReference>
<dbReference type="EMBL" id="AK013965">
    <property type="protein sequence ID" value="BAB29089.1"/>
    <property type="molecule type" value="mRNA"/>
</dbReference>
<dbReference type="EMBL" id="BC030319">
    <property type="protein sequence ID" value="AAH30319.1"/>
    <property type="molecule type" value="mRNA"/>
</dbReference>
<dbReference type="EMBL" id="BC033505">
    <property type="protein sequence ID" value="AAH33505.1"/>
    <property type="molecule type" value="mRNA"/>
</dbReference>
<dbReference type="CCDS" id="CCDS23628.1"/>
<dbReference type="RefSeq" id="NP_081168.1">
    <property type="nucleotide sequence ID" value="NM_026892.3"/>
</dbReference>
<dbReference type="SMR" id="Q9CXU9"/>
<dbReference type="BioGRID" id="213147">
    <property type="interactions" value="5"/>
</dbReference>
<dbReference type="FunCoup" id="Q9CXU9">
    <property type="interactions" value="1226"/>
</dbReference>
<dbReference type="STRING" id="10090.ENSMUSP00000007139"/>
<dbReference type="iPTMnet" id="Q9CXU9"/>
<dbReference type="PhosphoSitePlus" id="Q9CXU9"/>
<dbReference type="jPOST" id="Q9CXU9"/>
<dbReference type="PaxDb" id="10090-ENSMUSP00000007139"/>
<dbReference type="PeptideAtlas" id="Q9CXU9"/>
<dbReference type="ProteomicsDB" id="275447"/>
<dbReference type="Pumba" id="Q9CXU9"/>
<dbReference type="Antibodypedia" id="65170">
    <property type="antibodies" value="87 antibodies from 21 providers"/>
</dbReference>
<dbReference type="Ensembl" id="ENSMUST00000007139.6">
    <property type="protein sequence ID" value="ENSMUSP00000007139.5"/>
    <property type="gene ID" value="ENSMUSG00000006941.6"/>
</dbReference>
<dbReference type="GeneID" id="68969"/>
<dbReference type="KEGG" id="mmu:68969"/>
<dbReference type="UCSC" id="uc009scp.2">
    <property type="organism name" value="mouse"/>
</dbReference>
<dbReference type="AGR" id="MGI:1916219"/>
<dbReference type="CTD" id="10289"/>
<dbReference type="MGI" id="MGI:1916219">
    <property type="gene designation" value="Eif1b"/>
</dbReference>
<dbReference type="VEuPathDB" id="HostDB:ENSMUSG00000006941"/>
<dbReference type="eggNOG" id="KOG1770">
    <property type="taxonomic scope" value="Eukaryota"/>
</dbReference>
<dbReference type="GeneTree" id="ENSGT00940000160239"/>
<dbReference type="HOGENOM" id="CLU_082805_3_0_1"/>
<dbReference type="InParanoid" id="Q9CXU9"/>
<dbReference type="OMA" id="CEFMITQ"/>
<dbReference type="OrthoDB" id="10248435at2759"/>
<dbReference type="PhylomeDB" id="Q9CXU9"/>
<dbReference type="TreeFam" id="TF314417"/>
<dbReference type="BioGRID-ORCS" id="68969">
    <property type="hits" value="1 hit in 77 CRISPR screens"/>
</dbReference>
<dbReference type="ChiTaRS" id="Eif1b">
    <property type="organism name" value="mouse"/>
</dbReference>
<dbReference type="PRO" id="PR:Q9CXU9"/>
<dbReference type="Proteomes" id="UP000000589">
    <property type="component" value="Chromosome 9"/>
</dbReference>
<dbReference type="RNAct" id="Q9CXU9">
    <property type="molecule type" value="protein"/>
</dbReference>
<dbReference type="Bgee" id="ENSMUSG00000006941">
    <property type="expression patterns" value="Expressed in ventricular zone and 268 other cell types or tissues"/>
</dbReference>
<dbReference type="ExpressionAtlas" id="Q9CXU9">
    <property type="expression patterns" value="baseline and differential"/>
</dbReference>
<dbReference type="GO" id="GO:0003743">
    <property type="term" value="F:translation initiation factor activity"/>
    <property type="evidence" value="ECO:0007669"/>
    <property type="project" value="UniProtKB-KW"/>
</dbReference>
<dbReference type="CDD" id="cd11566">
    <property type="entry name" value="eIF1_SUI1"/>
    <property type="match status" value="1"/>
</dbReference>
<dbReference type="FunFam" id="3.30.780.10:FF:000003">
    <property type="entry name" value="Eukaryotic translation initiation factor 1b"/>
    <property type="match status" value="1"/>
</dbReference>
<dbReference type="Gene3D" id="3.30.780.10">
    <property type="entry name" value="SUI1-like domain"/>
    <property type="match status" value="1"/>
</dbReference>
<dbReference type="InterPro" id="IPR001950">
    <property type="entry name" value="SUI1"/>
</dbReference>
<dbReference type="InterPro" id="IPR036877">
    <property type="entry name" value="SUI1_dom_sf"/>
</dbReference>
<dbReference type="InterPro" id="IPR005874">
    <property type="entry name" value="SUI1_euk"/>
</dbReference>
<dbReference type="NCBIfam" id="TIGR01160">
    <property type="entry name" value="SUI1_MOF2"/>
    <property type="match status" value="1"/>
</dbReference>
<dbReference type="PANTHER" id="PTHR10388">
    <property type="entry name" value="EUKARYOTIC TRANSLATION INITIATION FACTOR SUI1"/>
    <property type="match status" value="1"/>
</dbReference>
<dbReference type="Pfam" id="PF01253">
    <property type="entry name" value="SUI1"/>
    <property type="match status" value="1"/>
</dbReference>
<dbReference type="PIRSF" id="PIRSF004499">
    <property type="entry name" value="SUI1_euk"/>
    <property type="match status" value="1"/>
</dbReference>
<dbReference type="SUPFAM" id="SSF55159">
    <property type="entry name" value="eIF1-like"/>
    <property type="match status" value="1"/>
</dbReference>
<dbReference type="PROSITE" id="PS50296">
    <property type="entry name" value="SUI1"/>
    <property type="match status" value="1"/>
</dbReference>
<reference key="1">
    <citation type="journal article" date="2005" name="Science">
        <title>The transcriptional landscape of the mammalian genome.</title>
        <authorList>
            <person name="Carninci P."/>
            <person name="Kasukawa T."/>
            <person name="Katayama S."/>
            <person name="Gough J."/>
            <person name="Frith M.C."/>
            <person name="Maeda N."/>
            <person name="Oyama R."/>
            <person name="Ravasi T."/>
            <person name="Lenhard B."/>
            <person name="Wells C."/>
            <person name="Kodzius R."/>
            <person name="Shimokawa K."/>
            <person name="Bajic V.B."/>
            <person name="Brenner S.E."/>
            <person name="Batalov S."/>
            <person name="Forrest A.R."/>
            <person name="Zavolan M."/>
            <person name="Davis M.J."/>
            <person name="Wilming L.G."/>
            <person name="Aidinis V."/>
            <person name="Allen J.E."/>
            <person name="Ambesi-Impiombato A."/>
            <person name="Apweiler R."/>
            <person name="Aturaliya R.N."/>
            <person name="Bailey T.L."/>
            <person name="Bansal M."/>
            <person name="Baxter L."/>
            <person name="Beisel K.W."/>
            <person name="Bersano T."/>
            <person name="Bono H."/>
            <person name="Chalk A.M."/>
            <person name="Chiu K.P."/>
            <person name="Choudhary V."/>
            <person name="Christoffels A."/>
            <person name="Clutterbuck D.R."/>
            <person name="Crowe M.L."/>
            <person name="Dalla E."/>
            <person name="Dalrymple B.P."/>
            <person name="de Bono B."/>
            <person name="Della Gatta G."/>
            <person name="di Bernardo D."/>
            <person name="Down T."/>
            <person name="Engstrom P."/>
            <person name="Fagiolini M."/>
            <person name="Faulkner G."/>
            <person name="Fletcher C.F."/>
            <person name="Fukushima T."/>
            <person name="Furuno M."/>
            <person name="Futaki S."/>
            <person name="Gariboldi M."/>
            <person name="Georgii-Hemming P."/>
            <person name="Gingeras T.R."/>
            <person name="Gojobori T."/>
            <person name="Green R.E."/>
            <person name="Gustincich S."/>
            <person name="Harbers M."/>
            <person name="Hayashi Y."/>
            <person name="Hensch T.K."/>
            <person name="Hirokawa N."/>
            <person name="Hill D."/>
            <person name="Huminiecki L."/>
            <person name="Iacono M."/>
            <person name="Ikeo K."/>
            <person name="Iwama A."/>
            <person name="Ishikawa T."/>
            <person name="Jakt M."/>
            <person name="Kanapin A."/>
            <person name="Katoh M."/>
            <person name="Kawasawa Y."/>
            <person name="Kelso J."/>
            <person name="Kitamura H."/>
            <person name="Kitano H."/>
            <person name="Kollias G."/>
            <person name="Krishnan S.P."/>
            <person name="Kruger A."/>
            <person name="Kummerfeld S.K."/>
            <person name="Kurochkin I.V."/>
            <person name="Lareau L.F."/>
            <person name="Lazarevic D."/>
            <person name="Lipovich L."/>
            <person name="Liu J."/>
            <person name="Liuni S."/>
            <person name="McWilliam S."/>
            <person name="Madan Babu M."/>
            <person name="Madera M."/>
            <person name="Marchionni L."/>
            <person name="Matsuda H."/>
            <person name="Matsuzawa S."/>
            <person name="Miki H."/>
            <person name="Mignone F."/>
            <person name="Miyake S."/>
            <person name="Morris K."/>
            <person name="Mottagui-Tabar S."/>
            <person name="Mulder N."/>
            <person name="Nakano N."/>
            <person name="Nakauchi H."/>
            <person name="Ng P."/>
            <person name="Nilsson R."/>
            <person name="Nishiguchi S."/>
            <person name="Nishikawa S."/>
            <person name="Nori F."/>
            <person name="Ohara O."/>
            <person name="Okazaki Y."/>
            <person name="Orlando V."/>
            <person name="Pang K.C."/>
            <person name="Pavan W.J."/>
            <person name="Pavesi G."/>
            <person name="Pesole G."/>
            <person name="Petrovsky N."/>
            <person name="Piazza S."/>
            <person name="Reed J."/>
            <person name="Reid J.F."/>
            <person name="Ring B.Z."/>
            <person name="Ringwald M."/>
            <person name="Rost B."/>
            <person name="Ruan Y."/>
            <person name="Salzberg S.L."/>
            <person name="Sandelin A."/>
            <person name="Schneider C."/>
            <person name="Schoenbach C."/>
            <person name="Sekiguchi K."/>
            <person name="Semple C.A."/>
            <person name="Seno S."/>
            <person name="Sessa L."/>
            <person name="Sheng Y."/>
            <person name="Shibata Y."/>
            <person name="Shimada H."/>
            <person name="Shimada K."/>
            <person name="Silva D."/>
            <person name="Sinclair B."/>
            <person name="Sperling S."/>
            <person name="Stupka E."/>
            <person name="Sugiura K."/>
            <person name="Sultana R."/>
            <person name="Takenaka Y."/>
            <person name="Taki K."/>
            <person name="Tammoja K."/>
            <person name="Tan S.L."/>
            <person name="Tang S."/>
            <person name="Taylor M.S."/>
            <person name="Tegner J."/>
            <person name="Teichmann S.A."/>
            <person name="Ueda H.R."/>
            <person name="van Nimwegen E."/>
            <person name="Verardo R."/>
            <person name="Wei C.L."/>
            <person name="Yagi K."/>
            <person name="Yamanishi H."/>
            <person name="Zabarovsky E."/>
            <person name="Zhu S."/>
            <person name="Zimmer A."/>
            <person name="Hide W."/>
            <person name="Bult C."/>
            <person name="Grimmond S.M."/>
            <person name="Teasdale R.D."/>
            <person name="Liu E.T."/>
            <person name="Brusic V."/>
            <person name="Quackenbush J."/>
            <person name="Wahlestedt C."/>
            <person name="Mattick J.S."/>
            <person name="Hume D.A."/>
            <person name="Kai C."/>
            <person name="Sasaki D."/>
            <person name="Tomaru Y."/>
            <person name="Fukuda S."/>
            <person name="Kanamori-Katayama M."/>
            <person name="Suzuki M."/>
            <person name="Aoki J."/>
            <person name="Arakawa T."/>
            <person name="Iida J."/>
            <person name="Imamura K."/>
            <person name="Itoh M."/>
            <person name="Kato T."/>
            <person name="Kawaji H."/>
            <person name="Kawagashira N."/>
            <person name="Kawashima T."/>
            <person name="Kojima M."/>
            <person name="Kondo S."/>
            <person name="Konno H."/>
            <person name="Nakano K."/>
            <person name="Ninomiya N."/>
            <person name="Nishio T."/>
            <person name="Okada M."/>
            <person name="Plessy C."/>
            <person name="Shibata K."/>
            <person name="Shiraki T."/>
            <person name="Suzuki S."/>
            <person name="Tagami M."/>
            <person name="Waki K."/>
            <person name="Watahiki A."/>
            <person name="Okamura-Oho Y."/>
            <person name="Suzuki H."/>
            <person name="Kawai J."/>
            <person name="Hayashizaki Y."/>
        </authorList>
    </citation>
    <scope>NUCLEOTIDE SEQUENCE [LARGE SCALE MRNA]</scope>
    <source>
        <strain>C57BL/6J</strain>
        <tissue>Cerebellum</tissue>
        <tissue>Embryo</tissue>
    </source>
</reference>
<reference key="2">
    <citation type="journal article" date="2004" name="Genome Res.">
        <title>The status, quality, and expansion of the NIH full-length cDNA project: the Mammalian Gene Collection (MGC).</title>
        <authorList>
            <consortium name="The MGC Project Team"/>
        </authorList>
    </citation>
    <scope>NUCLEOTIDE SEQUENCE [LARGE SCALE MRNA]</scope>
    <source>
        <strain>FVB/N</strain>
        <tissue>Colon</tissue>
        <tissue>Mammary tumor</tissue>
    </source>
</reference>
<reference key="3">
    <citation type="journal article" date="2010" name="Cell">
        <title>A tissue-specific atlas of mouse protein phosphorylation and expression.</title>
        <authorList>
            <person name="Huttlin E.L."/>
            <person name="Jedrychowski M.P."/>
            <person name="Elias J.E."/>
            <person name="Goswami T."/>
            <person name="Rad R."/>
            <person name="Beausoleil S.A."/>
            <person name="Villen J."/>
            <person name="Haas W."/>
            <person name="Sowa M.E."/>
            <person name="Gygi S.P."/>
        </authorList>
    </citation>
    <scope>IDENTIFICATION BY MASS SPECTROMETRY [LARGE SCALE ANALYSIS]</scope>
    <source>
        <tissue>Kidney</tissue>
        <tissue>Testis</tissue>
    </source>
</reference>
<accession>Q9CXU9</accession>
<keyword id="KW-0007">Acetylation</keyword>
<keyword id="KW-0396">Initiation factor</keyword>
<keyword id="KW-0597">Phosphoprotein</keyword>
<keyword id="KW-0648">Protein biosynthesis</keyword>
<keyword id="KW-1185">Reference proteome</keyword>
<name>EIF1B_MOUSE</name>
<feature type="initiator methionine" description="Removed" evidence="1">
    <location>
        <position position="1"/>
    </location>
</feature>
<feature type="chain" id="PRO_0000130559" description="Eukaryotic translation initiation factor 1b">
    <location>
        <begin position="2"/>
        <end position="113"/>
    </location>
</feature>
<feature type="modified residue" description="N-acetylserine" evidence="1">
    <location>
        <position position="2"/>
    </location>
</feature>
<feature type="modified residue" description="Phosphoserine" evidence="1">
    <location>
        <position position="9"/>
    </location>
</feature>
<feature type="sequence conflict" description="In Ref. 1; BAB29089." evidence="2" ref="1">
    <original>D</original>
    <variation>G</variation>
    <location>
        <position position="21"/>
    </location>
</feature>
<evidence type="ECO:0000250" key="1">
    <source>
        <dbReference type="UniProtKB" id="O60739"/>
    </source>
</evidence>
<evidence type="ECO:0000305" key="2"/>
<comment type="function">
    <text>Probably involved in translation.</text>
</comment>
<comment type="similarity">
    <text evidence="2">Belongs to the SUI1 family.</text>
</comment>